<proteinExistence type="inferred from homology"/>
<dbReference type="EMBL" id="AE015451">
    <property type="protein sequence ID" value="AAN70282.1"/>
    <property type="status" value="ALT_INIT"/>
    <property type="molecule type" value="Genomic_DNA"/>
</dbReference>
<dbReference type="RefSeq" id="NP_746818.3">
    <property type="nucleotide sequence ID" value="NC_002947.4"/>
</dbReference>
<dbReference type="RefSeq" id="WP_003249971.1">
    <property type="nucleotide sequence ID" value="NZ_CP169744.1"/>
</dbReference>
<dbReference type="SMR" id="Q88DV9"/>
<dbReference type="STRING" id="160488.PP_4709"/>
<dbReference type="PaxDb" id="160488-PP_4709"/>
<dbReference type="GeneID" id="97170078"/>
<dbReference type="KEGG" id="ppu:PP_4709"/>
<dbReference type="PATRIC" id="fig|160488.4.peg.5019"/>
<dbReference type="eggNOG" id="COG0184">
    <property type="taxonomic scope" value="Bacteria"/>
</dbReference>
<dbReference type="HOGENOM" id="CLU_148518_0_0_6"/>
<dbReference type="OrthoDB" id="9799262at2"/>
<dbReference type="PhylomeDB" id="Q88DV9"/>
<dbReference type="Proteomes" id="UP000000556">
    <property type="component" value="Chromosome"/>
</dbReference>
<dbReference type="GO" id="GO:0022627">
    <property type="term" value="C:cytosolic small ribosomal subunit"/>
    <property type="evidence" value="ECO:0007669"/>
    <property type="project" value="TreeGrafter"/>
</dbReference>
<dbReference type="GO" id="GO:0019843">
    <property type="term" value="F:rRNA binding"/>
    <property type="evidence" value="ECO:0007669"/>
    <property type="project" value="UniProtKB-UniRule"/>
</dbReference>
<dbReference type="GO" id="GO:0003735">
    <property type="term" value="F:structural constituent of ribosome"/>
    <property type="evidence" value="ECO:0007669"/>
    <property type="project" value="InterPro"/>
</dbReference>
<dbReference type="GO" id="GO:0006412">
    <property type="term" value="P:translation"/>
    <property type="evidence" value="ECO:0007669"/>
    <property type="project" value="UniProtKB-UniRule"/>
</dbReference>
<dbReference type="CDD" id="cd00353">
    <property type="entry name" value="Ribosomal_S15p_S13e"/>
    <property type="match status" value="1"/>
</dbReference>
<dbReference type="FunFam" id="1.10.287.10:FF:000002">
    <property type="entry name" value="30S ribosomal protein S15"/>
    <property type="match status" value="1"/>
</dbReference>
<dbReference type="Gene3D" id="6.10.250.3130">
    <property type="match status" value="1"/>
</dbReference>
<dbReference type="Gene3D" id="1.10.287.10">
    <property type="entry name" value="S15/NS1, RNA-binding"/>
    <property type="match status" value="1"/>
</dbReference>
<dbReference type="HAMAP" id="MF_01343_B">
    <property type="entry name" value="Ribosomal_uS15_B"/>
    <property type="match status" value="1"/>
</dbReference>
<dbReference type="InterPro" id="IPR000589">
    <property type="entry name" value="Ribosomal_uS15"/>
</dbReference>
<dbReference type="InterPro" id="IPR005290">
    <property type="entry name" value="Ribosomal_uS15_bac-type"/>
</dbReference>
<dbReference type="InterPro" id="IPR009068">
    <property type="entry name" value="uS15_NS1_RNA-bd_sf"/>
</dbReference>
<dbReference type="NCBIfam" id="TIGR00952">
    <property type="entry name" value="S15_bact"/>
    <property type="match status" value="1"/>
</dbReference>
<dbReference type="PANTHER" id="PTHR23321">
    <property type="entry name" value="RIBOSOMAL PROTEIN S15, BACTERIAL AND ORGANELLAR"/>
    <property type="match status" value="1"/>
</dbReference>
<dbReference type="PANTHER" id="PTHR23321:SF26">
    <property type="entry name" value="SMALL RIBOSOMAL SUBUNIT PROTEIN US15M"/>
    <property type="match status" value="1"/>
</dbReference>
<dbReference type="Pfam" id="PF00312">
    <property type="entry name" value="Ribosomal_S15"/>
    <property type="match status" value="1"/>
</dbReference>
<dbReference type="SMART" id="SM01387">
    <property type="entry name" value="Ribosomal_S15"/>
    <property type="match status" value="1"/>
</dbReference>
<dbReference type="SUPFAM" id="SSF47060">
    <property type="entry name" value="S15/NS1 RNA-binding domain"/>
    <property type="match status" value="1"/>
</dbReference>
<dbReference type="PROSITE" id="PS00362">
    <property type="entry name" value="RIBOSOMAL_S15"/>
    <property type="match status" value="1"/>
</dbReference>
<comment type="function">
    <text evidence="1">One of the primary rRNA binding proteins, it binds directly to 16S rRNA where it helps nucleate assembly of the platform of the 30S subunit by binding and bridging several RNA helices of the 16S rRNA.</text>
</comment>
<comment type="function">
    <text evidence="1">Forms an intersubunit bridge (bridge B4) with the 23S rRNA of the 50S subunit in the ribosome.</text>
</comment>
<comment type="subunit">
    <text evidence="1">Part of the 30S ribosomal subunit. Forms a bridge to the 50S subunit in the 70S ribosome, contacting the 23S rRNA.</text>
</comment>
<comment type="similarity">
    <text evidence="1">Belongs to the universal ribosomal protein uS15 family.</text>
</comment>
<comment type="sequence caution" evidence="2">
    <conflict type="erroneous initiation">
        <sequence resource="EMBL-CDS" id="AAN70282"/>
    </conflict>
</comment>
<name>RS15_PSEPK</name>
<feature type="chain" id="PRO_0000115513" description="Small ribosomal subunit protein uS15">
    <location>
        <begin position="1"/>
        <end position="89"/>
    </location>
</feature>
<reference key="1">
    <citation type="journal article" date="2002" name="Environ. Microbiol.">
        <title>Complete genome sequence and comparative analysis of the metabolically versatile Pseudomonas putida KT2440.</title>
        <authorList>
            <person name="Nelson K.E."/>
            <person name="Weinel C."/>
            <person name="Paulsen I.T."/>
            <person name="Dodson R.J."/>
            <person name="Hilbert H."/>
            <person name="Martins dos Santos V.A.P."/>
            <person name="Fouts D.E."/>
            <person name="Gill S.R."/>
            <person name="Pop M."/>
            <person name="Holmes M."/>
            <person name="Brinkac L.M."/>
            <person name="Beanan M.J."/>
            <person name="DeBoy R.T."/>
            <person name="Daugherty S.C."/>
            <person name="Kolonay J.F."/>
            <person name="Madupu R."/>
            <person name="Nelson W.C."/>
            <person name="White O."/>
            <person name="Peterson J.D."/>
            <person name="Khouri H.M."/>
            <person name="Hance I."/>
            <person name="Chris Lee P."/>
            <person name="Holtzapple E.K."/>
            <person name="Scanlan D."/>
            <person name="Tran K."/>
            <person name="Moazzez A."/>
            <person name="Utterback T.R."/>
            <person name="Rizzo M."/>
            <person name="Lee K."/>
            <person name="Kosack D."/>
            <person name="Moestl D."/>
            <person name="Wedler H."/>
            <person name="Lauber J."/>
            <person name="Stjepandic D."/>
            <person name="Hoheisel J."/>
            <person name="Straetz M."/>
            <person name="Heim S."/>
            <person name="Kiewitz C."/>
            <person name="Eisen J.A."/>
            <person name="Timmis K.N."/>
            <person name="Duesterhoeft A."/>
            <person name="Tuemmler B."/>
            <person name="Fraser C.M."/>
        </authorList>
    </citation>
    <scope>NUCLEOTIDE SEQUENCE [LARGE SCALE GENOMIC DNA]</scope>
    <source>
        <strain>ATCC 47054 / DSM 6125 / CFBP 8728 / NCIMB 11950 / KT2440</strain>
    </source>
</reference>
<sequence length="89" mass="10031">MALSVEEKAQIVAEYQQAAGDTGSPEVQVALLTANINKLQGHFKANDKDHHSRRGLIRMVNQRRKLLDYLKGKDTTRYSALIGRLGLRR</sequence>
<evidence type="ECO:0000255" key="1">
    <source>
        <dbReference type="HAMAP-Rule" id="MF_01343"/>
    </source>
</evidence>
<evidence type="ECO:0000305" key="2"/>
<accession>Q88DV9</accession>
<keyword id="KW-1185">Reference proteome</keyword>
<keyword id="KW-0687">Ribonucleoprotein</keyword>
<keyword id="KW-0689">Ribosomal protein</keyword>
<keyword id="KW-0694">RNA-binding</keyword>
<keyword id="KW-0699">rRNA-binding</keyword>
<protein>
    <recommendedName>
        <fullName evidence="1">Small ribosomal subunit protein uS15</fullName>
    </recommendedName>
    <alternativeName>
        <fullName evidence="2">30S ribosomal protein S15</fullName>
    </alternativeName>
</protein>
<gene>
    <name evidence="1" type="primary">rpsO</name>
    <name type="ordered locus">PP_4709</name>
</gene>
<organism>
    <name type="scientific">Pseudomonas putida (strain ATCC 47054 / DSM 6125 / CFBP 8728 / NCIMB 11950 / KT2440)</name>
    <dbReference type="NCBI Taxonomy" id="160488"/>
    <lineage>
        <taxon>Bacteria</taxon>
        <taxon>Pseudomonadati</taxon>
        <taxon>Pseudomonadota</taxon>
        <taxon>Gammaproteobacteria</taxon>
        <taxon>Pseudomonadales</taxon>
        <taxon>Pseudomonadaceae</taxon>
        <taxon>Pseudomonas</taxon>
    </lineage>
</organism>